<evidence type="ECO:0000250" key="1"/>
<evidence type="ECO:0000250" key="2">
    <source>
        <dbReference type="UniProtKB" id="Q9JKY0"/>
    </source>
</evidence>
<evidence type="ECO:0000269" key="3">
    <source>
    </source>
</evidence>
<evidence type="ECO:0000269" key="4">
    <source>
    </source>
</evidence>
<evidence type="ECO:0000269" key="5">
    <source>
    </source>
</evidence>
<evidence type="ECO:0000269" key="6">
    <source>
    </source>
</evidence>
<evidence type="ECO:0000269" key="7">
    <source>
    </source>
</evidence>
<evidence type="ECO:0000269" key="8">
    <source ref="6"/>
</evidence>
<evidence type="ECO:0000303" key="9">
    <source>
    </source>
</evidence>
<evidence type="ECO:0000303" key="10">
    <source>
    </source>
</evidence>
<evidence type="ECO:0000305" key="11"/>
<evidence type="ECO:0000312" key="12">
    <source>
        <dbReference type="HGNC" id="HGNC:10445"/>
    </source>
</evidence>
<evidence type="ECO:0007744" key="13">
    <source>
    </source>
</evidence>
<evidence type="ECO:0007829" key="14">
    <source>
        <dbReference type="PDB" id="4CRU"/>
    </source>
</evidence>
<evidence type="ECO:0007829" key="15">
    <source>
        <dbReference type="PDB" id="4CT7"/>
    </source>
</evidence>
<reference key="1">
    <citation type="journal article" date="1998" name="Mol. Cell. Biol.">
        <title>Novel factor highly conserved among eukaryotes controls sexual development in fission yeast.</title>
        <authorList>
            <person name="Okazaki N."/>
            <person name="Okazaki K."/>
            <person name="Watanabe Y."/>
            <person name="Kato-Hayashi M."/>
            <person name="Yamamoto M."/>
            <person name="Okayama H."/>
        </authorList>
    </citation>
    <scope>NUCLEOTIDE SEQUENCE [GENOMIC DNA]</scope>
    <scope>TISSUE SPECIFICITY</scope>
    <source>
        <tissue>Foreskin</tissue>
    </source>
</reference>
<reference key="2">
    <citation type="journal article" date="2004" name="Nat. Genet.">
        <title>Complete sequencing and characterization of 21,243 full-length human cDNAs.</title>
        <authorList>
            <person name="Ota T."/>
            <person name="Suzuki Y."/>
            <person name="Nishikawa T."/>
            <person name="Otsuki T."/>
            <person name="Sugiyama T."/>
            <person name="Irie R."/>
            <person name="Wakamatsu A."/>
            <person name="Hayashi K."/>
            <person name="Sato H."/>
            <person name="Nagai K."/>
            <person name="Kimura K."/>
            <person name="Makita H."/>
            <person name="Sekine M."/>
            <person name="Obayashi M."/>
            <person name="Nishi T."/>
            <person name="Shibahara T."/>
            <person name="Tanaka T."/>
            <person name="Ishii S."/>
            <person name="Yamamoto J."/>
            <person name="Saito K."/>
            <person name="Kawai Y."/>
            <person name="Isono Y."/>
            <person name="Nakamura Y."/>
            <person name="Nagahari K."/>
            <person name="Murakami K."/>
            <person name="Yasuda T."/>
            <person name="Iwayanagi T."/>
            <person name="Wagatsuma M."/>
            <person name="Shiratori A."/>
            <person name="Sudo H."/>
            <person name="Hosoiri T."/>
            <person name="Kaku Y."/>
            <person name="Kodaira H."/>
            <person name="Kondo H."/>
            <person name="Sugawara M."/>
            <person name="Takahashi M."/>
            <person name="Kanda K."/>
            <person name="Yokoi T."/>
            <person name="Furuya T."/>
            <person name="Kikkawa E."/>
            <person name="Omura Y."/>
            <person name="Abe K."/>
            <person name="Kamihara K."/>
            <person name="Katsuta N."/>
            <person name="Sato K."/>
            <person name="Tanikawa M."/>
            <person name="Yamazaki M."/>
            <person name="Ninomiya K."/>
            <person name="Ishibashi T."/>
            <person name="Yamashita H."/>
            <person name="Murakawa K."/>
            <person name="Fujimori K."/>
            <person name="Tanai H."/>
            <person name="Kimata M."/>
            <person name="Watanabe M."/>
            <person name="Hiraoka S."/>
            <person name="Chiba Y."/>
            <person name="Ishida S."/>
            <person name="Ono Y."/>
            <person name="Takiguchi S."/>
            <person name="Watanabe S."/>
            <person name="Yosida M."/>
            <person name="Hotuta T."/>
            <person name="Kusano J."/>
            <person name="Kanehori K."/>
            <person name="Takahashi-Fujii A."/>
            <person name="Hara H."/>
            <person name="Tanase T.-O."/>
            <person name="Nomura Y."/>
            <person name="Togiya S."/>
            <person name="Komai F."/>
            <person name="Hara R."/>
            <person name="Takeuchi K."/>
            <person name="Arita M."/>
            <person name="Imose N."/>
            <person name="Musashino K."/>
            <person name="Yuuki H."/>
            <person name="Oshima A."/>
            <person name="Sasaki N."/>
            <person name="Aotsuka S."/>
            <person name="Yoshikawa Y."/>
            <person name="Matsunawa H."/>
            <person name="Ichihara T."/>
            <person name="Shiohata N."/>
            <person name="Sano S."/>
            <person name="Moriya S."/>
            <person name="Momiyama H."/>
            <person name="Satoh N."/>
            <person name="Takami S."/>
            <person name="Terashima Y."/>
            <person name="Suzuki O."/>
            <person name="Nakagawa S."/>
            <person name="Senoh A."/>
            <person name="Mizoguchi H."/>
            <person name="Goto Y."/>
            <person name="Shimizu F."/>
            <person name="Wakebe H."/>
            <person name="Hishigaki H."/>
            <person name="Watanabe T."/>
            <person name="Sugiyama A."/>
            <person name="Takemoto M."/>
            <person name="Kawakami B."/>
            <person name="Yamazaki M."/>
            <person name="Watanabe K."/>
            <person name="Kumagai A."/>
            <person name="Itakura S."/>
            <person name="Fukuzumi Y."/>
            <person name="Fujimori Y."/>
            <person name="Komiyama M."/>
            <person name="Tashiro H."/>
            <person name="Tanigami A."/>
            <person name="Fujiwara T."/>
            <person name="Ono T."/>
            <person name="Yamada K."/>
            <person name="Fujii Y."/>
            <person name="Ozaki K."/>
            <person name="Hirao M."/>
            <person name="Ohmori Y."/>
            <person name="Kawabata A."/>
            <person name="Hikiji T."/>
            <person name="Kobatake N."/>
            <person name="Inagaki H."/>
            <person name="Ikema Y."/>
            <person name="Okamoto S."/>
            <person name="Okitani R."/>
            <person name="Kawakami T."/>
            <person name="Noguchi S."/>
            <person name="Itoh T."/>
            <person name="Shigeta K."/>
            <person name="Senba T."/>
            <person name="Matsumura K."/>
            <person name="Nakajima Y."/>
            <person name="Mizuno T."/>
            <person name="Morinaga M."/>
            <person name="Sasaki M."/>
            <person name="Togashi T."/>
            <person name="Oyama M."/>
            <person name="Hata H."/>
            <person name="Watanabe M."/>
            <person name="Komatsu T."/>
            <person name="Mizushima-Sugano J."/>
            <person name="Satoh T."/>
            <person name="Shirai Y."/>
            <person name="Takahashi Y."/>
            <person name="Nakagawa K."/>
            <person name="Okumura K."/>
            <person name="Nagase T."/>
            <person name="Nomura N."/>
            <person name="Kikuchi H."/>
            <person name="Masuho Y."/>
            <person name="Yamashita R."/>
            <person name="Nakai K."/>
            <person name="Yada T."/>
            <person name="Nakamura Y."/>
            <person name="Ohara O."/>
            <person name="Isogai T."/>
            <person name="Sugano S."/>
        </authorList>
    </citation>
    <scope>NUCLEOTIDE SEQUENCE [LARGE SCALE MRNA] (ISOFORM 2)</scope>
</reference>
<reference key="3">
    <citation type="journal article" date="2005" name="Nature">
        <title>Generation and annotation of the DNA sequences of human chromosomes 2 and 4.</title>
        <authorList>
            <person name="Hillier L.W."/>
            <person name="Graves T.A."/>
            <person name="Fulton R.S."/>
            <person name="Fulton L.A."/>
            <person name="Pepin K.H."/>
            <person name="Minx P."/>
            <person name="Wagner-McPherson C."/>
            <person name="Layman D."/>
            <person name="Wylie K."/>
            <person name="Sekhon M."/>
            <person name="Becker M.C."/>
            <person name="Fewell G.A."/>
            <person name="Delehaunty K.D."/>
            <person name="Miner T.L."/>
            <person name="Nash W.E."/>
            <person name="Kremitzki C."/>
            <person name="Oddy L."/>
            <person name="Du H."/>
            <person name="Sun H."/>
            <person name="Bradshaw-Cordum H."/>
            <person name="Ali J."/>
            <person name="Carter J."/>
            <person name="Cordes M."/>
            <person name="Harris A."/>
            <person name="Isak A."/>
            <person name="van Brunt A."/>
            <person name="Nguyen C."/>
            <person name="Du F."/>
            <person name="Courtney L."/>
            <person name="Kalicki J."/>
            <person name="Ozersky P."/>
            <person name="Abbott S."/>
            <person name="Armstrong J."/>
            <person name="Belter E.A."/>
            <person name="Caruso L."/>
            <person name="Cedroni M."/>
            <person name="Cotton M."/>
            <person name="Davidson T."/>
            <person name="Desai A."/>
            <person name="Elliott G."/>
            <person name="Erb T."/>
            <person name="Fronick C."/>
            <person name="Gaige T."/>
            <person name="Haakenson W."/>
            <person name="Haglund K."/>
            <person name="Holmes A."/>
            <person name="Harkins R."/>
            <person name="Kim K."/>
            <person name="Kruchowski S.S."/>
            <person name="Strong C.M."/>
            <person name="Grewal N."/>
            <person name="Goyea E."/>
            <person name="Hou S."/>
            <person name="Levy A."/>
            <person name="Martinka S."/>
            <person name="Mead K."/>
            <person name="McLellan M.D."/>
            <person name="Meyer R."/>
            <person name="Randall-Maher J."/>
            <person name="Tomlinson C."/>
            <person name="Dauphin-Kohlberg S."/>
            <person name="Kozlowicz-Reilly A."/>
            <person name="Shah N."/>
            <person name="Swearengen-Shahid S."/>
            <person name="Snider J."/>
            <person name="Strong J.T."/>
            <person name="Thompson J."/>
            <person name="Yoakum M."/>
            <person name="Leonard S."/>
            <person name="Pearman C."/>
            <person name="Trani L."/>
            <person name="Radionenko M."/>
            <person name="Waligorski J.E."/>
            <person name="Wang C."/>
            <person name="Rock S.M."/>
            <person name="Tin-Wollam A.-M."/>
            <person name="Maupin R."/>
            <person name="Latreille P."/>
            <person name="Wendl M.C."/>
            <person name="Yang S.-P."/>
            <person name="Pohl C."/>
            <person name="Wallis J.W."/>
            <person name="Spieth J."/>
            <person name="Bieri T.A."/>
            <person name="Berkowicz N."/>
            <person name="Nelson J.O."/>
            <person name="Osborne J."/>
            <person name="Ding L."/>
            <person name="Meyer R."/>
            <person name="Sabo A."/>
            <person name="Shotland Y."/>
            <person name="Sinha P."/>
            <person name="Wohldmann P.E."/>
            <person name="Cook L.L."/>
            <person name="Hickenbotham M.T."/>
            <person name="Eldred J."/>
            <person name="Williams D."/>
            <person name="Jones T.A."/>
            <person name="She X."/>
            <person name="Ciccarelli F.D."/>
            <person name="Izaurralde E."/>
            <person name="Taylor J."/>
            <person name="Schmutz J."/>
            <person name="Myers R.M."/>
            <person name="Cox D.R."/>
            <person name="Huang X."/>
            <person name="McPherson J.D."/>
            <person name="Mardis E.R."/>
            <person name="Clifton S.W."/>
            <person name="Warren W.C."/>
            <person name="Chinwalla A.T."/>
            <person name="Eddy S.R."/>
            <person name="Marra M.A."/>
            <person name="Ovcharenko I."/>
            <person name="Furey T.S."/>
            <person name="Miller W."/>
            <person name="Eichler E.E."/>
            <person name="Bork P."/>
            <person name="Suyama M."/>
            <person name="Torrents D."/>
            <person name="Waterston R.H."/>
            <person name="Wilson R.K."/>
        </authorList>
    </citation>
    <scope>NUCLEOTIDE SEQUENCE [LARGE SCALE GENOMIC DNA]</scope>
</reference>
<reference key="4">
    <citation type="submission" date="2005-07" db="EMBL/GenBank/DDBJ databases">
        <authorList>
            <person name="Mural R.J."/>
            <person name="Istrail S."/>
            <person name="Sutton G.G."/>
            <person name="Florea L."/>
            <person name="Halpern A.L."/>
            <person name="Mobarry C.M."/>
            <person name="Lippert R."/>
            <person name="Walenz B."/>
            <person name="Shatkay H."/>
            <person name="Dew I."/>
            <person name="Miller J.R."/>
            <person name="Flanigan M.J."/>
            <person name="Edwards N.J."/>
            <person name="Bolanos R."/>
            <person name="Fasulo D."/>
            <person name="Halldorsson B.V."/>
            <person name="Hannenhalli S."/>
            <person name="Turner R."/>
            <person name="Yooseph S."/>
            <person name="Lu F."/>
            <person name="Nusskern D.R."/>
            <person name="Shue B.C."/>
            <person name="Zheng X.H."/>
            <person name="Zhong F."/>
            <person name="Delcher A.L."/>
            <person name="Huson D.H."/>
            <person name="Kravitz S.A."/>
            <person name="Mouchard L."/>
            <person name="Reinert K."/>
            <person name="Remington K.A."/>
            <person name="Clark A.G."/>
            <person name="Waterman M.S."/>
            <person name="Eichler E.E."/>
            <person name="Adams M.D."/>
            <person name="Hunkapiller M.W."/>
            <person name="Myers E.W."/>
            <person name="Venter J.C."/>
        </authorList>
    </citation>
    <scope>NUCLEOTIDE SEQUENCE [LARGE SCALE GENOMIC DNA]</scope>
</reference>
<reference key="5">
    <citation type="journal article" date="2004" name="Genome Res.">
        <title>The status, quality, and expansion of the NIH full-length cDNA project: the Mammalian Gene Collection (MGC).</title>
        <authorList>
            <consortium name="The MGC Project Team"/>
        </authorList>
    </citation>
    <scope>NUCLEOTIDE SEQUENCE [LARGE SCALE MRNA] (ISOFORMS 1 AND 3)</scope>
    <scope>VARIANT THR-143</scope>
    <source>
        <tissue>Brain</tissue>
    </source>
</reference>
<reference key="6">
    <citation type="submission" date="2009-10" db="UniProtKB">
        <authorList>
            <person name="Bienvenut W.V."/>
            <person name="Lempens A."/>
            <person name="Norman J.C."/>
        </authorList>
    </citation>
    <scope>PROTEIN SEQUENCE OF 1-21; 36-44; 180-188 AND 275-292</scope>
    <scope>ACETYLATION AT MET-1</scope>
    <scope>IDENTIFICATION BY MASS SPECTROMETRY</scope>
    <source>
        <tissue>Ovarian carcinoma</tissue>
    </source>
</reference>
<reference key="7">
    <citation type="journal article" date="2008" name="J. Biol. Chem.">
        <title>Components of the CCR4-NOT complex function as nuclear hormone receptor coactivators via association with the NRC-interacting Factor NIF-1.</title>
        <authorList>
            <person name="Garapaty S."/>
            <person name="Mahajan M.A."/>
            <person name="Samuels H.H."/>
        </authorList>
    </citation>
    <scope>FUNCTION</scope>
    <scope>INTERACTION WITH ZNF335</scope>
</reference>
<reference key="8">
    <citation type="journal article" date="2009" name="Anal. Chem.">
        <title>Lys-N and trypsin cover complementary parts of the phosphoproteome in a refined SCX-based approach.</title>
        <authorList>
            <person name="Gauci S."/>
            <person name="Helbig A.O."/>
            <person name="Slijper M."/>
            <person name="Krijgsveld J."/>
            <person name="Heck A.J."/>
            <person name="Mohammed S."/>
        </authorList>
    </citation>
    <scope>ACETYLATION [LARGE SCALE ANALYSIS] AT MET-1</scope>
    <scope>IDENTIFICATION BY MASS SPECTROMETRY [LARGE SCALE ANALYSIS]</scope>
</reference>
<reference key="9">
    <citation type="journal article" date="2011" name="BMC Syst. Biol.">
        <title>Initial characterization of the human central proteome.</title>
        <authorList>
            <person name="Burkard T.R."/>
            <person name="Planyavsky M."/>
            <person name="Kaupe I."/>
            <person name="Breitwieser F.P."/>
            <person name="Buerckstuemmer T."/>
            <person name="Bennett K.L."/>
            <person name="Superti-Furga G."/>
            <person name="Colinge J."/>
        </authorList>
    </citation>
    <scope>IDENTIFICATION BY MASS SPECTROMETRY [LARGE SCALE ANALYSIS]</scope>
</reference>
<reference key="10">
    <citation type="journal article" date="2013" name="RNA Biol.">
        <title>C2ORF29/CNOT11 and CNOT10 form a new module of the CCR4-NOT complex.</title>
        <authorList>
            <person name="Mauxion F."/>
            <person name="Preve B."/>
            <person name="Seraphin B."/>
        </authorList>
    </citation>
    <scope>IDENTIFICATION IN THE CCR4-NOT COMPLEX</scope>
</reference>
<reference key="11">
    <citation type="journal article" date="2015" name="Proteomics">
        <title>N-terminome analysis of the human mitochondrial proteome.</title>
        <authorList>
            <person name="Vaca Jacome A.S."/>
            <person name="Rabilloud T."/>
            <person name="Schaeffer-Reiss C."/>
            <person name="Rompais M."/>
            <person name="Ayoub D."/>
            <person name="Lane L."/>
            <person name="Bairoch A."/>
            <person name="Van Dorsselaer A."/>
            <person name="Carapito C."/>
        </authorList>
    </citation>
    <scope>IDENTIFICATION BY MASS SPECTROMETRY [LARGE SCALE ANALYSIS]</scope>
</reference>
<reference key="12">
    <citation type="journal article" date="2007" name="Protein Sci.">
        <title>Atomic model of human Rcd-1 reveals an armadillo-like-repeat protein with in vitro nucleic acid binding properties.</title>
        <authorList>
            <person name="Garces R.G."/>
            <person name="Gillon W."/>
            <person name="Pai E.F."/>
        </authorList>
    </citation>
    <scope>X-RAY CRYSTALLOGRAPHY (2.2 ANGSTROMS) OF 18-285</scope>
    <scope>DOMAIN</scope>
    <scope>SUBUNIT</scope>
    <scope>FUNCTION</scope>
    <scope>MUTAGENESIS OF ARG-227</scope>
</reference>
<name>CNOT9_HUMAN</name>
<keyword id="KW-0002">3D-structure</keyword>
<keyword id="KW-0007">Acetylation</keyword>
<keyword id="KW-0010">Activator</keyword>
<keyword id="KW-0025">Alternative splicing</keyword>
<keyword id="KW-0963">Cytoplasm</keyword>
<keyword id="KW-0903">Direct protein sequencing</keyword>
<keyword id="KW-0539">Nucleus</keyword>
<keyword id="KW-1267">Proteomics identification</keyword>
<keyword id="KW-1185">Reference proteome</keyword>
<keyword id="KW-0678">Repressor</keyword>
<keyword id="KW-0943">RNA-mediated gene silencing</keyword>
<keyword id="KW-0804">Transcription</keyword>
<keyword id="KW-0805">Transcription regulation</keyword>
<keyword id="KW-0810">Translation regulation</keyword>
<dbReference type="EMBL" id="D87957">
    <property type="protein sequence ID" value="BAA13508.1"/>
    <property type="molecule type" value="Genomic_DNA"/>
</dbReference>
<dbReference type="EMBL" id="AK293281">
    <property type="protein sequence ID" value="BAH11481.1"/>
    <property type="molecule type" value="mRNA"/>
</dbReference>
<dbReference type="EMBL" id="AC012510">
    <property type="status" value="NOT_ANNOTATED_CDS"/>
    <property type="molecule type" value="Genomic_DNA"/>
</dbReference>
<dbReference type="EMBL" id="CH471063">
    <property type="protein sequence ID" value="EAW70625.1"/>
    <property type="molecule type" value="Genomic_DNA"/>
</dbReference>
<dbReference type="EMBL" id="CH471063">
    <property type="protein sequence ID" value="EAW70624.1"/>
    <property type="molecule type" value="Genomic_DNA"/>
</dbReference>
<dbReference type="EMBL" id="BC007102">
    <property type="protein sequence ID" value="AAH07102.2"/>
    <property type="status" value="ALT_INIT"/>
    <property type="molecule type" value="mRNA"/>
</dbReference>
<dbReference type="EMBL" id="BC137455">
    <property type="protein sequence ID" value="AAI37456.1"/>
    <property type="molecule type" value="mRNA"/>
</dbReference>
<dbReference type="EMBL" id="BC137456">
    <property type="protein sequence ID" value="AAI37457.1"/>
    <property type="molecule type" value="mRNA"/>
</dbReference>
<dbReference type="CCDS" id="CCDS33379.1">
    <molecule id="Q92600-1"/>
</dbReference>
<dbReference type="CCDS" id="CCDS63122.1">
    <molecule id="Q92600-2"/>
</dbReference>
<dbReference type="CCDS" id="CCDS63123.1">
    <molecule id="Q92600-3"/>
</dbReference>
<dbReference type="RefSeq" id="NP_001258563.1">
    <molecule id="Q92600-2"/>
    <property type="nucleotide sequence ID" value="NM_001271634.2"/>
</dbReference>
<dbReference type="RefSeq" id="NP_001258564.1">
    <molecule id="Q92600-3"/>
    <property type="nucleotide sequence ID" value="NM_001271635.2"/>
</dbReference>
<dbReference type="RefSeq" id="NP_005435.1">
    <molecule id="Q92600-1"/>
    <property type="nucleotide sequence ID" value="NM_005444.3"/>
</dbReference>
<dbReference type="PDB" id="2FV2">
    <property type="method" value="X-ray"/>
    <property type="resolution" value="2.20 A"/>
    <property type="chains" value="A/B/C/D=18-285"/>
</dbReference>
<dbReference type="PDB" id="4CRU">
    <property type="method" value="X-ray"/>
    <property type="resolution" value="1.65 A"/>
    <property type="chains" value="B=19-285"/>
</dbReference>
<dbReference type="PDB" id="4CRV">
    <property type="method" value="X-ray"/>
    <property type="resolution" value="2.05 A"/>
    <property type="chains" value="B=19-285"/>
</dbReference>
<dbReference type="PDB" id="4CT6">
    <property type="method" value="X-ray"/>
    <property type="resolution" value="2.10 A"/>
    <property type="chains" value="B=18-285"/>
</dbReference>
<dbReference type="PDB" id="4CT7">
    <property type="method" value="X-ray"/>
    <property type="resolution" value="1.90 A"/>
    <property type="chains" value="B=16-285"/>
</dbReference>
<dbReference type="PDB" id="5LSW">
    <property type="method" value="X-ray"/>
    <property type="resolution" value="2.15 A"/>
    <property type="chains" value="A/C=19-285"/>
</dbReference>
<dbReference type="PDB" id="5ONA">
    <property type="method" value="X-ray"/>
    <property type="resolution" value="2.70 A"/>
    <property type="chains" value="B/E=19-285"/>
</dbReference>
<dbReference type="PDB" id="5ONB">
    <property type="method" value="X-ray"/>
    <property type="resolution" value="3.00 A"/>
    <property type="chains" value="A/C/E/G=19-285"/>
</dbReference>
<dbReference type="PDB" id="6HOM">
    <property type="method" value="X-ray"/>
    <property type="resolution" value="2.10 A"/>
    <property type="chains" value="A/C=19-285"/>
</dbReference>
<dbReference type="PDB" id="6HON">
    <property type="method" value="X-ray"/>
    <property type="resolution" value="2.20 A"/>
    <property type="chains" value="A/C=19-285"/>
</dbReference>
<dbReference type="PDB" id="9FL8">
    <property type="method" value="X-ray"/>
    <property type="resolution" value="2.64 A"/>
    <property type="chains" value="B/C=19-285"/>
</dbReference>
<dbReference type="PDBsum" id="2FV2"/>
<dbReference type="PDBsum" id="4CRU"/>
<dbReference type="PDBsum" id="4CRV"/>
<dbReference type="PDBsum" id="4CT6"/>
<dbReference type="PDBsum" id="4CT7"/>
<dbReference type="PDBsum" id="5LSW"/>
<dbReference type="PDBsum" id="5ONA"/>
<dbReference type="PDBsum" id="5ONB"/>
<dbReference type="PDBsum" id="6HOM"/>
<dbReference type="PDBsum" id="6HON"/>
<dbReference type="PDBsum" id="9FL8"/>
<dbReference type="SMR" id="Q92600"/>
<dbReference type="BioGRID" id="114573">
    <property type="interactions" value="241"/>
</dbReference>
<dbReference type="ComplexPortal" id="CPX-2522">
    <property type="entry name" value="CCR4-NOT mRNA deadenylase complex, CNOT6L-CNOT7 variant"/>
</dbReference>
<dbReference type="ComplexPortal" id="CPX-2535">
    <property type="entry name" value="CCR4-NOT mRNA deadenylase complex, CNOT6L-CNOT8 variant"/>
</dbReference>
<dbReference type="ComplexPortal" id="CPX-2849">
    <property type="entry name" value="CCR4-NOT mRNA deadenylase complex, CNOT6-CNOT8 variant"/>
</dbReference>
<dbReference type="ComplexPortal" id="CPX-707">
    <property type="entry name" value="CCR4-NOT mRNA deadenylase complex, CNOT6-CNOT7 variant"/>
</dbReference>
<dbReference type="CORUM" id="Q92600"/>
<dbReference type="DIP" id="DIP-46840N"/>
<dbReference type="FunCoup" id="Q92600">
    <property type="interactions" value="2075"/>
</dbReference>
<dbReference type="IntAct" id="Q92600">
    <property type="interactions" value="68"/>
</dbReference>
<dbReference type="STRING" id="9606.ENSP00000486540"/>
<dbReference type="ChEMBL" id="CHEMBL4105961"/>
<dbReference type="GlyGen" id="Q92600">
    <property type="glycosylation" value="1 site, 1 O-linked glycan (1 site)"/>
</dbReference>
<dbReference type="iPTMnet" id="Q92600"/>
<dbReference type="PhosphoSitePlus" id="Q92600"/>
<dbReference type="SwissPalm" id="Q92600"/>
<dbReference type="BioMuta" id="CNOT9"/>
<dbReference type="DMDM" id="74716599"/>
<dbReference type="jPOST" id="Q92600"/>
<dbReference type="MassIVE" id="Q92600"/>
<dbReference type="PaxDb" id="9606-ENSP00000273064"/>
<dbReference type="PeptideAtlas" id="Q92600"/>
<dbReference type="ProteomicsDB" id="6190"/>
<dbReference type="ProteomicsDB" id="6324"/>
<dbReference type="ProteomicsDB" id="75350">
    <molecule id="Q92600-1"/>
</dbReference>
<dbReference type="Pumba" id="Q92600"/>
<dbReference type="Antibodypedia" id="51420">
    <property type="antibodies" value="115 antibodies from 22 providers"/>
</dbReference>
<dbReference type="DNASU" id="9125"/>
<dbReference type="Ensembl" id="ENST00000273064.11">
    <molecule id="Q92600-1"/>
    <property type="protein sequence ID" value="ENSP00000273064.6"/>
    <property type="gene ID" value="ENSG00000144580.15"/>
</dbReference>
<dbReference type="Ensembl" id="ENST00000295701.9">
    <molecule id="Q92600-3"/>
    <property type="protein sequence ID" value="ENSP00000295701.5"/>
    <property type="gene ID" value="ENSG00000144580.15"/>
</dbReference>
<dbReference type="Ensembl" id="ENST00000627282.2">
    <molecule id="Q92600-2"/>
    <property type="protein sequence ID" value="ENSP00000486540.1"/>
    <property type="gene ID" value="ENSG00000144580.15"/>
</dbReference>
<dbReference type="GeneID" id="9125"/>
<dbReference type="KEGG" id="hsa:9125"/>
<dbReference type="MANE-Select" id="ENST00000273064.11">
    <property type="protein sequence ID" value="ENSP00000273064.6"/>
    <property type="RefSeq nucleotide sequence ID" value="NM_005444.3"/>
    <property type="RefSeq protein sequence ID" value="NP_005435.1"/>
</dbReference>
<dbReference type="UCSC" id="uc002vih.3">
    <molecule id="Q92600-1"/>
    <property type="organism name" value="human"/>
</dbReference>
<dbReference type="AGR" id="HGNC:10445"/>
<dbReference type="CTD" id="9125"/>
<dbReference type="DisGeNET" id="9125"/>
<dbReference type="GeneCards" id="CNOT9"/>
<dbReference type="HGNC" id="HGNC:10445">
    <property type="gene designation" value="CNOT9"/>
</dbReference>
<dbReference type="HPA" id="ENSG00000144580">
    <property type="expression patterns" value="Low tissue specificity"/>
</dbReference>
<dbReference type="MalaCards" id="CNOT9"/>
<dbReference type="MIM" id="612054">
    <property type="type" value="gene"/>
</dbReference>
<dbReference type="neXtProt" id="NX_Q92600"/>
<dbReference type="OpenTargets" id="ENSG00000144580"/>
<dbReference type="PharmGKB" id="PA34859"/>
<dbReference type="VEuPathDB" id="HostDB:ENSG00000144580"/>
<dbReference type="eggNOG" id="KOG3036">
    <property type="taxonomic scope" value="Eukaryota"/>
</dbReference>
<dbReference type="GeneTree" id="ENSGT00390000001225"/>
<dbReference type="HOGENOM" id="CLU_039962_2_0_1"/>
<dbReference type="InParanoid" id="Q92600"/>
<dbReference type="OMA" id="EKVYTWI"/>
<dbReference type="OrthoDB" id="1183224at2759"/>
<dbReference type="PAN-GO" id="Q92600">
    <property type="GO annotations" value="3 GO annotations based on evolutionary models"/>
</dbReference>
<dbReference type="PhylomeDB" id="Q92600"/>
<dbReference type="TreeFam" id="TF105734"/>
<dbReference type="PathwayCommons" id="Q92600"/>
<dbReference type="Reactome" id="R-HSA-429947">
    <property type="pathway name" value="Deadenylation of mRNA"/>
</dbReference>
<dbReference type="Reactome" id="R-HSA-5617472">
    <property type="pathway name" value="Activation of anterior HOX genes in hindbrain development during early embryogenesis"/>
</dbReference>
<dbReference type="Reactome" id="R-HSA-6804115">
    <property type="pathway name" value="TP53 regulates transcription of additional cell cycle genes whose exact role in the p53 pathway remain uncertain"/>
</dbReference>
<dbReference type="Reactome" id="R-HSA-9820841">
    <property type="pathway name" value="M-decay: degradation of maternal mRNAs by maternally stored factors"/>
</dbReference>
<dbReference type="SignaLink" id="Q92600"/>
<dbReference type="SIGNOR" id="Q92600"/>
<dbReference type="BioGRID-ORCS" id="9125">
    <property type="hits" value="406 hits in 1156 CRISPR screens"/>
</dbReference>
<dbReference type="CD-CODE" id="232F8A39">
    <property type="entry name" value="P-body"/>
</dbReference>
<dbReference type="CD-CODE" id="DEE660B4">
    <property type="entry name" value="Stress granule"/>
</dbReference>
<dbReference type="ChiTaRS" id="CNOT9">
    <property type="organism name" value="human"/>
</dbReference>
<dbReference type="EvolutionaryTrace" id="Q92600"/>
<dbReference type="GenomeRNAi" id="9125"/>
<dbReference type="Pharos" id="Q92600">
    <property type="development level" value="Tbio"/>
</dbReference>
<dbReference type="PRO" id="PR:Q92600"/>
<dbReference type="Proteomes" id="UP000005640">
    <property type="component" value="Chromosome 2"/>
</dbReference>
<dbReference type="RNAct" id="Q92600">
    <property type="molecule type" value="protein"/>
</dbReference>
<dbReference type="Bgee" id="ENSG00000144580">
    <property type="expression patterns" value="Expressed in adrenal tissue and 198 other cell types or tissues"/>
</dbReference>
<dbReference type="ExpressionAtlas" id="Q92600">
    <property type="expression patterns" value="baseline and differential"/>
</dbReference>
<dbReference type="GO" id="GO:0030014">
    <property type="term" value="C:CCR4-NOT complex"/>
    <property type="evidence" value="ECO:0000314"/>
    <property type="project" value="UniProtKB"/>
</dbReference>
<dbReference type="GO" id="GO:0030015">
    <property type="term" value="C:CCR4-NOT core complex"/>
    <property type="evidence" value="ECO:0000318"/>
    <property type="project" value="GO_Central"/>
</dbReference>
<dbReference type="GO" id="GO:0005829">
    <property type="term" value="C:cytosol"/>
    <property type="evidence" value="ECO:0000304"/>
    <property type="project" value="Reactome"/>
</dbReference>
<dbReference type="GO" id="GO:0016020">
    <property type="term" value="C:membrane"/>
    <property type="evidence" value="ECO:0007005"/>
    <property type="project" value="UniProtKB"/>
</dbReference>
<dbReference type="GO" id="GO:0005634">
    <property type="term" value="C:nucleus"/>
    <property type="evidence" value="ECO:0007669"/>
    <property type="project" value="UniProtKB-SubCell"/>
</dbReference>
<dbReference type="GO" id="GO:0000932">
    <property type="term" value="C:P-body"/>
    <property type="evidence" value="ECO:0000250"/>
    <property type="project" value="UniProtKB"/>
</dbReference>
<dbReference type="GO" id="GO:0032991">
    <property type="term" value="C:protein-containing complex"/>
    <property type="evidence" value="ECO:0000314"/>
    <property type="project" value="UniProtKB"/>
</dbReference>
<dbReference type="GO" id="GO:0005154">
    <property type="term" value="F:epidermal growth factor receptor binding"/>
    <property type="evidence" value="ECO:0000353"/>
    <property type="project" value="UniProtKB"/>
</dbReference>
<dbReference type="GO" id="GO:0019900">
    <property type="term" value="F:kinase binding"/>
    <property type="evidence" value="ECO:0000353"/>
    <property type="project" value="UniProtKB"/>
</dbReference>
<dbReference type="GO" id="GO:0019904">
    <property type="term" value="F:protein domain specific binding"/>
    <property type="evidence" value="ECO:0000353"/>
    <property type="project" value="BHF-UCL"/>
</dbReference>
<dbReference type="GO" id="GO:0042803">
    <property type="term" value="F:protein homodimerization activity"/>
    <property type="evidence" value="ECO:0000314"/>
    <property type="project" value="BHF-UCL"/>
</dbReference>
<dbReference type="GO" id="GO:0003713">
    <property type="term" value="F:transcription coactivator activity"/>
    <property type="evidence" value="ECO:0000314"/>
    <property type="project" value="GO_Central"/>
</dbReference>
<dbReference type="GO" id="GO:0019221">
    <property type="term" value="P:cytokine-mediated signaling pathway"/>
    <property type="evidence" value="ECO:0007669"/>
    <property type="project" value="Ensembl"/>
</dbReference>
<dbReference type="GO" id="GO:0033147">
    <property type="term" value="P:negative regulation of intracellular estrogen receptor signaling pathway"/>
    <property type="evidence" value="ECO:0000315"/>
    <property type="project" value="UniProtKB"/>
</dbReference>
<dbReference type="GO" id="GO:0017148">
    <property type="term" value="P:negative regulation of translation"/>
    <property type="evidence" value="ECO:0000318"/>
    <property type="project" value="GO_Central"/>
</dbReference>
<dbReference type="GO" id="GO:0000289">
    <property type="term" value="P:nuclear-transcribed mRNA poly(A) tail shortening"/>
    <property type="evidence" value="ECO:0000303"/>
    <property type="project" value="ComplexPortal"/>
</dbReference>
<dbReference type="GO" id="GO:0045742">
    <property type="term" value="P:positive regulation of epidermal growth factor receptor signaling pathway"/>
    <property type="evidence" value="ECO:0000315"/>
    <property type="project" value="UniProtKB"/>
</dbReference>
<dbReference type="GO" id="GO:0033138">
    <property type="term" value="P:positive regulation of peptidyl-serine phosphorylation"/>
    <property type="evidence" value="ECO:0000315"/>
    <property type="project" value="UniProtKB"/>
</dbReference>
<dbReference type="GO" id="GO:0031047">
    <property type="term" value="P:regulatory ncRNA-mediated gene silencing"/>
    <property type="evidence" value="ECO:0007669"/>
    <property type="project" value="UniProtKB-KW"/>
</dbReference>
<dbReference type="GO" id="GO:0007548">
    <property type="term" value="P:sex differentiation"/>
    <property type="evidence" value="ECO:0000304"/>
    <property type="project" value="ProtInc"/>
</dbReference>
<dbReference type="FunFam" id="1.25.10.10:FF:000037">
    <property type="entry name" value="CCR4-NOT transcription complex subunit 9"/>
    <property type="match status" value="1"/>
</dbReference>
<dbReference type="Gene3D" id="1.25.10.10">
    <property type="entry name" value="Leucine-rich Repeat Variant"/>
    <property type="match status" value="1"/>
</dbReference>
<dbReference type="InterPro" id="IPR011989">
    <property type="entry name" value="ARM-like"/>
</dbReference>
<dbReference type="InterPro" id="IPR016024">
    <property type="entry name" value="ARM-type_fold"/>
</dbReference>
<dbReference type="InterPro" id="IPR007216">
    <property type="entry name" value="CNOT9"/>
</dbReference>
<dbReference type="PANTHER" id="PTHR12262">
    <property type="entry name" value="CCR4-NOT TRANSCRIPTION COMPLEX SUBUNIT 9"/>
    <property type="match status" value="1"/>
</dbReference>
<dbReference type="Pfam" id="PF04078">
    <property type="entry name" value="Rcd1"/>
    <property type="match status" value="1"/>
</dbReference>
<dbReference type="SUPFAM" id="SSF48371">
    <property type="entry name" value="ARM repeat"/>
    <property type="match status" value="1"/>
</dbReference>
<feature type="chain" id="PRO_0000327224" description="CCR4-NOT transcription complex subunit 9">
    <location>
        <begin position="1"/>
        <end position="299"/>
    </location>
</feature>
<feature type="modified residue" description="N-acetylmethionine" evidence="8 13">
    <location>
        <position position="1"/>
    </location>
</feature>
<feature type="splice variant" id="VSP_054371" description="In isoform 2." evidence="9">
    <original>I</original>
    <variation>IVETGFHHVGQADLELPTSSDLPASASQSAGIT</variation>
    <location>
        <position position="143"/>
    </location>
</feature>
<feature type="splice variant" id="VSP_055744" description="In isoform 3." evidence="10">
    <original>AREALRQCLPDQLK</original>
    <variation>FSDLTFCWSSFQRK</variation>
    <location>
        <begin position="245"/>
        <end position="258"/>
    </location>
</feature>
<feature type="splice variant" id="VSP_055745" description="In isoform 3." evidence="10">
    <location>
        <begin position="259"/>
        <end position="299"/>
    </location>
</feature>
<feature type="sequence variant" id="VAR_042429" evidence="3">
    <original>I</original>
    <variation>T</variation>
    <location>
        <position position="143"/>
    </location>
</feature>
<feature type="mutagenesis site" description="Loss of DNA binding." evidence="4">
    <original>R</original>
    <variation>E</variation>
    <location>
        <position position="227"/>
    </location>
</feature>
<feature type="helix" evidence="14">
    <location>
        <begin position="19"/>
        <end position="27"/>
    </location>
</feature>
<feature type="strand" evidence="15">
    <location>
        <begin position="29"/>
        <end position="31"/>
    </location>
</feature>
<feature type="helix" evidence="14">
    <location>
        <begin position="32"/>
        <end position="43"/>
    </location>
</feature>
<feature type="turn" evidence="14">
    <location>
        <begin position="44"/>
        <end position="48"/>
    </location>
</feature>
<feature type="helix" evidence="14">
    <location>
        <begin position="52"/>
        <end position="58"/>
    </location>
</feature>
<feature type="strand" evidence="14">
    <location>
        <begin position="59"/>
        <end position="61"/>
    </location>
</feature>
<feature type="helix" evidence="14">
    <location>
        <begin position="62"/>
        <end position="71"/>
    </location>
</feature>
<feature type="helix" evidence="14">
    <location>
        <begin position="72"/>
        <end position="76"/>
    </location>
</feature>
<feature type="turn" evidence="14">
    <location>
        <begin position="77"/>
        <end position="80"/>
    </location>
</feature>
<feature type="helix" evidence="14">
    <location>
        <begin position="84"/>
        <end position="102"/>
    </location>
</feature>
<feature type="turn" evidence="14">
    <location>
        <begin position="104"/>
        <end position="106"/>
    </location>
</feature>
<feature type="helix" evidence="14">
    <location>
        <begin position="107"/>
        <end position="112"/>
    </location>
</feature>
<feature type="helix" evidence="14">
    <location>
        <begin position="115"/>
        <end position="118"/>
    </location>
</feature>
<feature type="helix" evidence="14">
    <location>
        <begin position="120"/>
        <end position="123"/>
    </location>
</feature>
<feature type="helix" evidence="14">
    <location>
        <begin position="130"/>
        <end position="147"/>
    </location>
</feature>
<feature type="helix" evidence="14">
    <location>
        <begin position="152"/>
        <end position="160"/>
    </location>
</feature>
<feature type="helix" evidence="14">
    <location>
        <begin position="164"/>
        <end position="173"/>
    </location>
</feature>
<feature type="helix" evidence="14">
    <location>
        <begin position="176"/>
        <end position="191"/>
    </location>
</feature>
<feature type="helix" evidence="14">
    <location>
        <begin position="193"/>
        <end position="199"/>
    </location>
</feature>
<feature type="helix" evidence="14">
    <location>
        <begin position="203"/>
        <end position="222"/>
    </location>
</feature>
<feature type="helix" evidence="14">
    <location>
        <begin position="226"/>
        <end position="239"/>
    </location>
</feature>
<feature type="helix" evidence="14">
    <location>
        <begin position="243"/>
        <end position="252"/>
    </location>
</feature>
<feature type="helix" evidence="14">
    <location>
        <begin position="255"/>
        <end position="257"/>
    </location>
</feature>
<feature type="turn" evidence="14">
    <location>
        <begin position="261"/>
        <end position="268"/>
    </location>
</feature>
<feature type="helix" evidence="14">
    <location>
        <begin position="270"/>
        <end position="284"/>
    </location>
</feature>
<organism>
    <name type="scientific">Homo sapiens</name>
    <name type="common">Human</name>
    <dbReference type="NCBI Taxonomy" id="9606"/>
    <lineage>
        <taxon>Eukaryota</taxon>
        <taxon>Metazoa</taxon>
        <taxon>Chordata</taxon>
        <taxon>Craniata</taxon>
        <taxon>Vertebrata</taxon>
        <taxon>Euteleostomi</taxon>
        <taxon>Mammalia</taxon>
        <taxon>Eutheria</taxon>
        <taxon>Euarchontoglires</taxon>
        <taxon>Primates</taxon>
        <taxon>Haplorrhini</taxon>
        <taxon>Catarrhini</taxon>
        <taxon>Hominidae</taxon>
        <taxon>Homo</taxon>
    </lineage>
</organism>
<gene>
    <name evidence="12" type="primary">CNOT9</name>
    <name type="synonym">RCD1</name>
    <name type="synonym">RQCD1</name>
</gene>
<accession>Q92600</accession>
<accession>B2RPI0</accession>
<accession>B5MDQ4</accession>
<accession>B7Z1E5</accession>
<accession>Q96IX4</accession>
<sequence>MHSLATAAPVPTTLAQVDREKIYQWINELSSPETRENALLELSKKRESVPDLAPMLWHSFGTIAALLQEIVNIYPSINPPTLTAHQSNRVCNALALLQCVASHPETRSAFLAAHIPLFLYPFLHTVSKTRPFEYLRLTSLGVIGALVKTDEQEVINFLLTTEIIPLCLRIMESGSELSKTVATFILQKILLDDTGLAYICQTYERFSHVAMILGKMVLQLSKEPSARLLKHVVRCYLRLSDNPRAREALRQCLPDQLKDTTFAQVLKDDTTTKRWLAQLVKNLQEGQVTDPRGIPLPPQ</sequence>
<protein>
    <recommendedName>
        <fullName evidence="12">CCR4-NOT transcription complex subunit 9</fullName>
    </recommendedName>
    <alternativeName>
        <fullName>Cell differentiation protein RQCD1 homolog</fullName>
        <shortName>Rcd-1</shortName>
    </alternativeName>
</protein>
<comment type="function">
    <text evidence="1 4 5">Component of the CCR4-NOT complex which is one of the major cellular mRNA deadenylases and is linked to various cellular processes including bulk mRNA degradation, miRNA-mediated repression, translational repression during translational initiation and general transcription regulation. Additional complex functions may be a consequence of its influence on mRNA expression. Involved in down-regulation of MYB- and JUN-dependent transcription. May play a role in cell differentiation (By similarity). Can bind oligonucleotides, such as poly-G, poly-C or poly-T (in vitro), but the physiological relevance of this is not certain. Does not bind poly-A. Enhances ligand-dependent transcriptional activity of nuclear hormone receptors, including RARA, expect ESR1-mediated transcription that is not only slightly increased, if at all.</text>
</comment>
<comment type="subunit">
    <text evidence="1 4 5 6">Homodimer. Component of the CCR4-NOT complex; distinct complexes seem to exist that differ in the participation of probably mutually exclusive catalytic subunits. Interacts with MYB, ATF2, RARA, RARB, RARG, RXRA, RXRB and RXRG. Identified in a complex with ATF2 bound to target DNA (By similarity). Interacts with NANOS2 (By similarity). Directly interacts with ZNF335.</text>
</comment>
<comment type="interaction">
    <interactant intactId="EBI-357079">
        <id>Q92600</id>
    </interactant>
    <interactant intactId="EBI-1046635">
        <id>Q96LI5</id>
        <label>CNOT6L</label>
    </interactant>
    <organismsDiffer>false</organismsDiffer>
    <experiments>3</experiments>
</comment>
<comment type="interaction">
    <interactant intactId="EBI-357079">
        <id>Q92600</id>
    </interactant>
    <interactant intactId="EBI-723281">
        <id>P50616</id>
        <label>TOB1</label>
    </interactant>
    <organismsDiffer>false</organismsDiffer>
    <experiments>4</experiments>
</comment>
<comment type="interaction">
    <interactant intactId="EBI-12907584">
        <id>Q92600-3</id>
    </interactant>
    <interactant intactId="EBI-448167">
        <id>P24522</id>
        <label>GADD45A</label>
    </interactant>
    <organismsDiffer>false</organismsDiffer>
    <experiments>5</experiments>
</comment>
<comment type="interaction">
    <interactant intactId="EBI-12907584">
        <id>Q92600-3</id>
    </interactant>
    <interactant intactId="EBI-448187">
        <id>O75293</id>
        <label>GADD45B</label>
    </interactant>
    <organismsDiffer>false</organismsDiffer>
    <experiments>3</experiments>
</comment>
<comment type="interaction">
    <interactant intactId="EBI-12907584">
        <id>Q92600-3</id>
    </interactant>
    <interactant intactId="EBI-448202">
        <id>O95257</id>
        <label>GADD45G</label>
    </interactant>
    <organismsDiffer>false</organismsDiffer>
    <experiments>3</experiments>
</comment>
<comment type="interaction">
    <interactant intactId="EBI-12907584">
        <id>Q92600-3</id>
    </interactant>
    <interactant intactId="EBI-6165891">
        <id>Q14696</id>
        <label>MESD</label>
    </interactant>
    <organismsDiffer>false</organismsDiffer>
    <experiments>3</experiments>
</comment>
<comment type="subcellular location">
    <subcellularLocation>
        <location evidence="2">Nucleus</location>
    </subcellularLocation>
    <subcellularLocation>
        <location evidence="2">Cytoplasm</location>
        <location evidence="2">P-body</location>
    </subcellularLocation>
    <text evidence="2">NANOS2 promotes its localization to P-body.</text>
</comment>
<comment type="alternative products">
    <event type="alternative splicing"/>
    <isoform>
        <id>Q92600-1</id>
        <name>1</name>
        <sequence type="displayed"/>
    </isoform>
    <isoform>
        <id>Q92600-2</id>
        <name>2</name>
        <sequence type="described" ref="VSP_054371"/>
    </isoform>
    <isoform>
        <id>Q92600-3</id>
        <name>3</name>
        <sequence type="described" ref="VSP_055744 VSP_055745"/>
    </isoform>
</comment>
<comment type="tissue specificity">
    <text evidence="7">Detected in spleen, thymus, prostate, testis, ovary and intestine.</text>
</comment>
<comment type="similarity">
    <text evidence="11">Belongs to the CNOT9 family.</text>
</comment>
<comment type="sequence caution" evidence="11">
    <conflict type="erroneous initiation">
        <sequence resource="EMBL-CDS" id="AAH07102"/>
    </conflict>
    <text>Extended N-terminus.</text>
</comment>
<proteinExistence type="evidence at protein level"/>